<protein>
    <recommendedName>
        <fullName evidence="1">Large ribosomal subunit protein bL33</fullName>
    </recommendedName>
    <alternativeName>
        <fullName evidence="2">50S ribosomal protein L33</fullName>
    </alternativeName>
</protein>
<accession>Q92FW7</accession>
<gene>
    <name evidence="1" type="primary">rpmG</name>
    <name type="ordered locus">RC1360</name>
</gene>
<evidence type="ECO:0000255" key="1">
    <source>
        <dbReference type="HAMAP-Rule" id="MF_00294"/>
    </source>
</evidence>
<evidence type="ECO:0000305" key="2"/>
<organism>
    <name type="scientific">Rickettsia conorii (strain ATCC VR-613 / Malish 7)</name>
    <dbReference type="NCBI Taxonomy" id="272944"/>
    <lineage>
        <taxon>Bacteria</taxon>
        <taxon>Pseudomonadati</taxon>
        <taxon>Pseudomonadota</taxon>
        <taxon>Alphaproteobacteria</taxon>
        <taxon>Rickettsiales</taxon>
        <taxon>Rickettsiaceae</taxon>
        <taxon>Rickettsieae</taxon>
        <taxon>Rickettsia</taxon>
        <taxon>spotted fever group</taxon>
    </lineage>
</organism>
<dbReference type="EMBL" id="AE006914">
    <property type="protein sequence ID" value="AAL03898.1"/>
    <property type="molecule type" value="Genomic_DNA"/>
</dbReference>
<dbReference type="PIR" id="H97869">
    <property type="entry name" value="H97869"/>
</dbReference>
<dbReference type="RefSeq" id="WP_004997072.1">
    <property type="nucleotide sequence ID" value="NC_003103.1"/>
</dbReference>
<dbReference type="SMR" id="Q92FW7"/>
<dbReference type="GeneID" id="95361741"/>
<dbReference type="KEGG" id="rco:RC1360"/>
<dbReference type="HOGENOM" id="CLU_190949_1_0_5"/>
<dbReference type="Proteomes" id="UP000000816">
    <property type="component" value="Chromosome"/>
</dbReference>
<dbReference type="GO" id="GO:0005737">
    <property type="term" value="C:cytoplasm"/>
    <property type="evidence" value="ECO:0007669"/>
    <property type="project" value="UniProtKB-ARBA"/>
</dbReference>
<dbReference type="GO" id="GO:0015934">
    <property type="term" value="C:large ribosomal subunit"/>
    <property type="evidence" value="ECO:0007669"/>
    <property type="project" value="TreeGrafter"/>
</dbReference>
<dbReference type="GO" id="GO:0003735">
    <property type="term" value="F:structural constituent of ribosome"/>
    <property type="evidence" value="ECO:0007669"/>
    <property type="project" value="InterPro"/>
</dbReference>
<dbReference type="GO" id="GO:0006412">
    <property type="term" value="P:translation"/>
    <property type="evidence" value="ECO:0007669"/>
    <property type="project" value="UniProtKB-UniRule"/>
</dbReference>
<dbReference type="Gene3D" id="2.20.28.120">
    <property type="entry name" value="Ribosomal protein L33"/>
    <property type="match status" value="1"/>
</dbReference>
<dbReference type="HAMAP" id="MF_00294">
    <property type="entry name" value="Ribosomal_bL33"/>
    <property type="match status" value="1"/>
</dbReference>
<dbReference type="InterPro" id="IPR001705">
    <property type="entry name" value="Ribosomal_bL33"/>
</dbReference>
<dbReference type="InterPro" id="IPR018264">
    <property type="entry name" value="Ribosomal_bL33_CS"/>
</dbReference>
<dbReference type="InterPro" id="IPR038584">
    <property type="entry name" value="Ribosomal_bL33_sf"/>
</dbReference>
<dbReference type="InterPro" id="IPR011332">
    <property type="entry name" value="Ribosomal_zn-bd"/>
</dbReference>
<dbReference type="NCBIfam" id="NF001860">
    <property type="entry name" value="PRK00595.1"/>
    <property type="match status" value="1"/>
</dbReference>
<dbReference type="NCBIfam" id="TIGR01023">
    <property type="entry name" value="rpmG_bact"/>
    <property type="match status" value="1"/>
</dbReference>
<dbReference type="PANTHER" id="PTHR15238">
    <property type="entry name" value="54S RIBOSOMAL PROTEIN L39, MITOCHONDRIAL"/>
    <property type="match status" value="1"/>
</dbReference>
<dbReference type="PANTHER" id="PTHR15238:SF1">
    <property type="entry name" value="LARGE RIBOSOMAL SUBUNIT PROTEIN BL33M"/>
    <property type="match status" value="1"/>
</dbReference>
<dbReference type="Pfam" id="PF00471">
    <property type="entry name" value="Ribosomal_L33"/>
    <property type="match status" value="1"/>
</dbReference>
<dbReference type="SUPFAM" id="SSF57829">
    <property type="entry name" value="Zn-binding ribosomal proteins"/>
    <property type="match status" value="1"/>
</dbReference>
<dbReference type="PROSITE" id="PS00582">
    <property type="entry name" value="RIBOSOMAL_L33"/>
    <property type="match status" value="1"/>
</dbReference>
<sequence>MAKKNKNVLVRLVSTAGTGVFWVKKRNPKTQTEKLSFRKYDKVVRKHVLFKEEKIK</sequence>
<keyword id="KW-0687">Ribonucleoprotein</keyword>
<keyword id="KW-0689">Ribosomal protein</keyword>
<name>RL33_RICCN</name>
<comment type="similarity">
    <text evidence="1">Belongs to the bacterial ribosomal protein bL33 family.</text>
</comment>
<proteinExistence type="inferred from homology"/>
<feature type="chain" id="PRO_0000170205" description="Large ribosomal subunit protein bL33">
    <location>
        <begin position="1"/>
        <end position="56"/>
    </location>
</feature>
<reference key="1">
    <citation type="journal article" date="2001" name="Science">
        <title>Mechanisms of evolution in Rickettsia conorii and R. prowazekii.</title>
        <authorList>
            <person name="Ogata H."/>
            <person name="Audic S."/>
            <person name="Renesto-Audiffren P."/>
            <person name="Fournier P.-E."/>
            <person name="Barbe V."/>
            <person name="Samson D."/>
            <person name="Roux V."/>
            <person name="Cossart P."/>
            <person name="Weissenbach J."/>
            <person name="Claverie J.-M."/>
            <person name="Raoult D."/>
        </authorList>
    </citation>
    <scope>NUCLEOTIDE SEQUENCE [LARGE SCALE GENOMIC DNA]</scope>
    <source>
        <strain>ATCC VR-613 / Malish 7</strain>
    </source>
</reference>